<proteinExistence type="inferred from homology"/>
<gene>
    <name evidence="1" type="primary">cynS</name>
    <name type="ordered locus">Bcen_4778</name>
</gene>
<comment type="function">
    <text evidence="1">Catalyzes the reaction of cyanate with bicarbonate to produce ammonia and carbon dioxide.</text>
</comment>
<comment type="catalytic activity">
    <reaction evidence="1">
        <text>cyanate + hydrogencarbonate + 3 H(+) = NH4(+) + 2 CO2</text>
        <dbReference type="Rhea" id="RHEA:11120"/>
        <dbReference type="ChEBI" id="CHEBI:15378"/>
        <dbReference type="ChEBI" id="CHEBI:16526"/>
        <dbReference type="ChEBI" id="CHEBI:17544"/>
        <dbReference type="ChEBI" id="CHEBI:28938"/>
        <dbReference type="ChEBI" id="CHEBI:29195"/>
        <dbReference type="EC" id="4.2.1.104"/>
    </reaction>
</comment>
<comment type="similarity">
    <text evidence="1">Belongs to the cyanase family.</text>
</comment>
<sequence length="156" mass="16962">MIQSQHSQTARHALAETVVLAKARKNLSFAQLTEGTGLSEAFVTAALLGQHALPADAARVVADKLGLDDDAVLLLQMIPLRGSIDDRVPTDPTIYRFYEMLQVYGTTLKALVHEKFGDGIISAINFRLDVKKVDDPEGGSRAVITLDGKYLPTKPF</sequence>
<organism>
    <name type="scientific">Burkholderia orbicola (strain AU 1054)</name>
    <dbReference type="NCBI Taxonomy" id="331271"/>
    <lineage>
        <taxon>Bacteria</taxon>
        <taxon>Pseudomonadati</taxon>
        <taxon>Pseudomonadota</taxon>
        <taxon>Betaproteobacteria</taxon>
        <taxon>Burkholderiales</taxon>
        <taxon>Burkholderiaceae</taxon>
        <taxon>Burkholderia</taxon>
        <taxon>Burkholderia cepacia complex</taxon>
        <taxon>Burkholderia orbicola</taxon>
    </lineage>
</organism>
<accession>Q1BL48</accession>
<protein>
    <recommendedName>
        <fullName evidence="1">Cyanate hydratase</fullName>
        <shortName evidence="1">Cyanase</shortName>
        <ecNumber evidence="1">4.2.1.104</ecNumber>
    </recommendedName>
    <alternativeName>
        <fullName evidence="1">Cyanate hydrolase</fullName>
    </alternativeName>
    <alternativeName>
        <fullName evidence="1">Cyanate lyase</fullName>
    </alternativeName>
</protein>
<keyword id="KW-0456">Lyase</keyword>
<reference key="1">
    <citation type="submission" date="2006-05" db="EMBL/GenBank/DDBJ databases">
        <title>Complete sequence of chromosome 2 of Burkholderia cenocepacia AU 1054.</title>
        <authorList>
            <consortium name="US DOE Joint Genome Institute"/>
            <person name="Copeland A."/>
            <person name="Lucas S."/>
            <person name="Lapidus A."/>
            <person name="Barry K."/>
            <person name="Detter J.C."/>
            <person name="Glavina del Rio T."/>
            <person name="Hammon N."/>
            <person name="Israni S."/>
            <person name="Dalin E."/>
            <person name="Tice H."/>
            <person name="Pitluck S."/>
            <person name="Chain P."/>
            <person name="Malfatti S."/>
            <person name="Shin M."/>
            <person name="Vergez L."/>
            <person name="Schmutz J."/>
            <person name="Larimer F."/>
            <person name="Land M."/>
            <person name="Hauser L."/>
            <person name="Kyrpides N."/>
            <person name="Lykidis A."/>
            <person name="LiPuma J.J."/>
            <person name="Konstantinidis K."/>
            <person name="Tiedje J.M."/>
            <person name="Richardson P."/>
        </authorList>
    </citation>
    <scope>NUCLEOTIDE SEQUENCE [LARGE SCALE GENOMIC DNA]</scope>
    <source>
        <strain>AU 1054</strain>
    </source>
</reference>
<feature type="chain" id="PRO_1000051464" description="Cyanate hydratase">
    <location>
        <begin position="1"/>
        <end position="156"/>
    </location>
</feature>
<feature type="active site" evidence="1">
    <location>
        <position position="96"/>
    </location>
</feature>
<feature type="active site" evidence="1">
    <location>
        <position position="99"/>
    </location>
</feature>
<feature type="active site" evidence="1">
    <location>
        <position position="122"/>
    </location>
</feature>
<evidence type="ECO:0000255" key="1">
    <source>
        <dbReference type="HAMAP-Rule" id="MF_00535"/>
    </source>
</evidence>
<dbReference type="EC" id="4.2.1.104" evidence="1"/>
<dbReference type="EMBL" id="CP000379">
    <property type="protein sequence ID" value="ABF79657.1"/>
    <property type="molecule type" value="Genomic_DNA"/>
</dbReference>
<dbReference type="SMR" id="Q1BL48"/>
<dbReference type="HOGENOM" id="CLU_103452_1_1_4"/>
<dbReference type="GO" id="GO:0008824">
    <property type="term" value="F:cyanate hydratase activity"/>
    <property type="evidence" value="ECO:0007669"/>
    <property type="project" value="UniProtKB-UniRule"/>
</dbReference>
<dbReference type="GO" id="GO:0003677">
    <property type="term" value="F:DNA binding"/>
    <property type="evidence" value="ECO:0007669"/>
    <property type="project" value="InterPro"/>
</dbReference>
<dbReference type="GO" id="GO:0009439">
    <property type="term" value="P:cyanate metabolic process"/>
    <property type="evidence" value="ECO:0007669"/>
    <property type="project" value="UniProtKB-UniRule"/>
</dbReference>
<dbReference type="CDD" id="cd00559">
    <property type="entry name" value="Cyanase_C"/>
    <property type="match status" value="1"/>
</dbReference>
<dbReference type="FunFam" id="3.30.1160.10:FF:000001">
    <property type="entry name" value="Cyanate hydratase"/>
    <property type="match status" value="1"/>
</dbReference>
<dbReference type="Gene3D" id="3.30.1160.10">
    <property type="entry name" value="Cyanate lyase, C-terminal domain"/>
    <property type="match status" value="1"/>
</dbReference>
<dbReference type="Gene3D" id="1.10.260.40">
    <property type="entry name" value="lambda repressor-like DNA-binding domains"/>
    <property type="match status" value="1"/>
</dbReference>
<dbReference type="HAMAP" id="MF_00535">
    <property type="entry name" value="Cyanate_hydrat"/>
    <property type="match status" value="1"/>
</dbReference>
<dbReference type="InterPro" id="IPR008076">
    <property type="entry name" value="Cyanase"/>
</dbReference>
<dbReference type="InterPro" id="IPR003712">
    <property type="entry name" value="Cyanate_lyase_C"/>
</dbReference>
<dbReference type="InterPro" id="IPR036581">
    <property type="entry name" value="Cyanate_lyase_C_sf"/>
</dbReference>
<dbReference type="InterPro" id="IPR048564">
    <property type="entry name" value="CYNS_N"/>
</dbReference>
<dbReference type="InterPro" id="IPR010982">
    <property type="entry name" value="Lambda_DNA-bd_dom_sf"/>
</dbReference>
<dbReference type="NCBIfam" id="TIGR00673">
    <property type="entry name" value="cynS"/>
    <property type="match status" value="1"/>
</dbReference>
<dbReference type="NCBIfam" id="NF002773">
    <property type="entry name" value="PRK02866.1"/>
    <property type="match status" value="1"/>
</dbReference>
<dbReference type="PANTHER" id="PTHR34186">
    <property type="entry name" value="CYANATE HYDRATASE"/>
    <property type="match status" value="1"/>
</dbReference>
<dbReference type="PANTHER" id="PTHR34186:SF2">
    <property type="entry name" value="CYANATE HYDRATASE"/>
    <property type="match status" value="1"/>
</dbReference>
<dbReference type="Pfam" id="PF02560">
    <property type="entry name" value="Cyanate_lyase"/>
    <property type="match status" value="1"/>
</dbReference>
<dbReference type="Pfam" id="PF21291">
    <property type="entry name" value="CYNS_N"/>
    <property type="match status" value="1"/>
</dbReference>
<dbReference type="PIRSF" id="PIRSF001263">
    <property type="entry name" value="Cyanate_hydratas"/>
    <property type="match status" value="1"/>
</dbReference>
<dbReference type="PRINTS" id="PR01693">
    <property type="entry name" value="CYANASE"/>
</dbReference>
<dbReference type="SMART" id="SM01116">
    <property type="entry name" value="Cyanate_lyase"/>
    <property type="match status" value="1"/>
</dbReference>
<dbReference type="SUPFAM" id="SSF55234">
    <property type="entry name" value="Cyanase C-terminal domain"/>
    <property type="match status" value="1"/>
</dbReference>
<dbReference type="SUPFAM" id="SSF47413">
    <property type="entry name" value="lambda repressor-like DNA-binding domains"/>
    <property type="match status" value="1"/>
</dbReference>
<name>CYNS_BURO1</name>